<feature type="initiator methionine" description="Removed" evidence="3">
    <location>
        <position position="1"/>
    </location>
</feature>
<feature type="chain" id="PRO_0000159114" description="Ferredoxin">
    <location>
        <begin position="2"/>
        <end position="56"/>
    </location>
</feature>
<feature type="domain" description="4Fe-4S ferredoxin-type 1" evidence="2">
    <location>
        <begin position="2"/>
        <end position="29"/>
    </location>
</feature>
<feature type="domain" description="4Fe-4S ferredoxin-type 2" evidence="2">
    <location>
        <begin position="29"/>
        <end position="56"/>
    </location>
</feature>
<feature type="binding site" evidence="1">
    <location>
        <position position="9"/>
    </location>
    <ligand>
        <name>[4Fe-4S] cluster</name>
        <dbReference type="ChEBI" id="CHEBI:49883"/>
        <label>1</label>
    </ligand>
</feature>
<feature type="binding site" evidence="1">
    <location>
        <position position="12"/>
    </location>
    <ligand>
        <name>[4Fe-4S] cluster</name>
        <dbReference type="ChEBI" id="CHEBI:49883"/>
        <label>1</label>
    </ligand>
</feature>
<feature type="binding site" evidence="1">
    <location>
        <position position="15"/>
    </location>
    <ligand>
        <name>[4Fe-4S] cluster</name>
        <dbReference type="ChEBI" id="CHEBI:49883"/>
        <label>1</label>
    </ligand>
</feature>
<feature type="binding site" evidence="1">
    <location>
        <position position="19"/>
    </location>
    <ligand>
        <name>[4Fe-4S] cluster</name>
        <dbReference type="ChEBI" id="CHEBI:49883"/>
        <label>2</label>
    </ligand>
</feature>
<feature type="binding site" evidence="1">
    <location>
        <position position="38"/>
    </location>
    <ligand>
        <name>[4Fe-4S] cluster</name>
        <dbReference type="ChEBI" id="CHEBI:49883"/>
        <label>2</label>
    </ligand>
</feature>
<feature type="binding site" evidence="1">
    <location>
        <position position="41"/>
    </location>
    <ligand>
        <name>[4Fe-4S] cluster</name>
        <dbReference type="ChEBI" id="CHEBI:49883"/>
        <label>2</label>
    </ligand>
</feature>
<feature type="binding site" evidence="1">
    <location>
        <position position="44"/>
    </location>
    <ligand>
        <name>[4Fe-4S] cluster</name>
        <dbReference type="ChEBI" id="CHEBI:49883"/>
        <label>2</label>
    </ligand>
</feature>
<feature type="binding site" evidence="1">
    <location>
        <position position="48"/>
    </location>
    <ligand>
        <name>[4Fe-4S] cluster</name>
        <dbReference type="ChEBI" id="CHEBI:49883"/>
        <label>1</label>
    </ligand>
</feature>
<sequence length="56" mass="5654">MAYVINDSCISCGACEPECPVNAITAGDDKYVIDAATCIDCGACAGVCPVDAPQPE</sequence>
<protein>
    <recommendedName>
        <fullName>Ferredoxin</fullName>
    </recommendedName>
</protein>
<gene>
    <name type="ordered locus">CLOST_2292</name>
</gene>
<keyword id="KW-0004">4Fe-4S</keyword>
<keyword id="KW-0903">Direct protein sequencing</keyword>
<keyword id="KW-0249">Electron transport</keyword>
<keyword id="KW-0408">Iron</keyword>
<keyword id="KW-0411">Iron-sulfur</keyword>
<keyword id="KW-0479">Metal-binding</keyword>
<keyword id="KW-1185">Reference proteome</keyword>
<keyword id="KW-0677">Repeat</keyword>
<keyword id="KW-0813">Transport</keyword>
<name>FER_ACESD</name>
<accession>P80168</accession>
<accession>E3PUH1</accession>
<proteinExistence type="evidence at protein level"/>
<organism>
    <name type="scientific">Acetoanaerobium sticklandii (strain ATCC 12662 / DSM 519 / JCM 1433 / CCUG 9281 / NCIMB 10654 / HF)</name>
    <name type="common">Clostridium sticklandii</name>
    <dbReference type="NCBI Taxonomy" id="499177"/>
    <lineage>
        <taxon>Bacteria</taxon>
        <taxon>Bacillati</taxon>
        <taxon>Bacillota</taxon>
        <taxon>Clostridia</taxon>
        <taxon>Peptostreptococcales</taxon>
        <taxon>Filifactoraceae</taxon>
        <taxon>Acetoanaerobium</taxon>
    </lineage>
</organism>
<dbReference type="EMBL" id="FP565809">
    <property type="protein sequence ID" value="CBH22409.1"/>
    <property type="molecule type" value="Genomic_DNA"/>
</dbReference>
<dbReference type="PIR" id="S36791">
    <property type="entry name" value="S36791"/>
</dbReference>
<dbReference type="SMR" id="P80168"/>
<dbReference type="STRING" id="1511.CLOST_2292"/>
<dbReference type="KEGG" id="cst:CLOST_2292"/>
<dbReference type="eggNOG" id="COG2221">
    <property type="taxonomic scope" value="Bacteria"/>
</dbReference>
<dbReference type="HOGENOM" id="CLU_139698_11_4_9"/>
<dbReference type="BioCyc" id="CSTI499177:GJE9-2361-MONOMER"/>
<dbReference type="Proteomes" id="UP000007041">
    <property type="component" value="Chromosome"/>
</dbReference>
<dbReference type="GO" id="GO:0005737">
    <property type="term" value="C:cytoplasm"/>
    <property type="evidence" value="ECO:0007669"/>
    <property type="project" value="TreeGrafter"/>
</dbReference>
<dbReference type="GO" id="GO:0051539">
    <property type="term" value="F:4 iron, 4 sulfur cluster binding"/>
    <property type="evidence" value="ECO:0007669"/>
    <property type="project" value="UniProtKB-KW"/>
</dbReference>
<dbReference type="GO" id="GO:0046872">
    <property type="term" value="F:metal ion binding"/>
    <property type="evidence" value="ECO:0007669"/>
    <property type="project" value="UniProtKB-KW"/>
</dbReference>
<dbReference type="FunFam" id="3.30.70.20:FF:000045">
    <property type="entry name" value="Ferredoxin, 4Fe-4S"/>
    <property type="match status" value="1"/>
</dbReference>
<dbReference type="Gene3D" id="3.30.70.20">
    <property type="match status" value="1"/>
</dbReference>
<dbReference type="InterPro" id="IPR017896">
    <property type="entry name" value="4Fe4S_Fe-S-bd"/>
</dbReference>
<dbReference type="InterPro" id="IPR017900">
    <property type="entry name" value="4Fe4S_Fe_S_CS"/>
</dbReference>
<dbReference type="InterPro" id="IPR050157">
    <property type="entry name" value="PSI_iron-sulfur_center"/>
</dbReference>
<dbReference type="PANTHER" id="PTHR24960:SF79">
    <property type="entry name" value="PHOTOSYSTEM I IRON-SULFUR CENTER"/>
    <property type="match status" value="1"/>
</dbReference>
<dbReference type="PANTHER" id="PTHR24960">
    <property type="entry name" value="PHOTOSYSTEM I IRON-SULFUR CENTER-RELATED"/>
    <property type="match status" value="1"/>
</dbReference>
<dbReference type="Pfam" id="PF12838">
    <property type="entry name" value="Fer4_7"/>
    <property type="match status" value="1"/>
</dbReference>
<dbReference type="SUPFAM" id="SSF54862">
    <property type="entry name" value="4Fe-4S ferredoxins"/>
    <property type="match status" value="1"/>
</dbReference>
<dbReference type="PROSITE" id="PS00198">
    <property type="entry name" value="4FE4S_FER_1"/>
    <property type="match status" value="2"/>
</dbReference>
<dbReference type="PROSITE" id="PS51379">
    <property type="entry name" value="4FE4S_FER_2"/>
    <property type="match status" value="2"/>
</dbReference>
<comment type="function">
    <text>Ferredoxins are iron-sulfur proteins that transfer electrons in a wide variety of metabolic reactions.</text>
</comment>
<comment type="cofactor">
    <cofactor>
        <name>[4Fe-4S] cluster</name>
        <dbReference type="ChEBI" id="CHEBI:49883"/>
    </cofactor>
    <text>Binds 2 [4Fe-4S] clusters.</text>
</comment>
<evidence type="ECO:0000250" key="1"/>
<evidence type="ECO:0000255" key="2">
    <source>
        <dbReference type="PROSITE-ProRule" id="PRU00711"/>
    </source>
</evidence>
<evidence type="ECO:0000269" key="3">
    <source>
    </source>
</evidence>
<reference key="1">
    <citation type="journal article" date="2010" name="BMC Genomics">
        <title>Clostridium sticklandii, a specialist in amino acid degradation:revisiting its metabolism through its genome sequence.</title>
        <authorList>
            <person name="Fonknechten N."/>
            <person name="Chaussonnerie S."/>
            <person name="Tricot S."/>
            <person name="Lajus A."/>
            <person name="Andreesen J.R."/>
            <person name="Perchat N."/>
            <person name="Pelletier E."/>
            <person name="Gouyvenoux M."/>
            <person name="Barbe V."/>
            <person name="Salanoubat M."/>
            <person name="Le Paslier D."/>
            <person name="Weissenbach J."/>
            <person name="Cohen G.N."/>
            <person name="Kreimeyer A."/>
        </authorList>
    </citation>
    <scope>NUCLEOTIDE SEQUENCE [LARGE SCALE GENOMIC DNA]</scope>
    <source>
        <strain>ATCC 12662 / DSM 519 / JCM 1433 / CCUG 9281 / NCIMB 10654 / HF</strain>
    </source>
</reference>
<reference key="2">
    <citation type="journal article" date="1993" name="Biochem. J.">
        <title>Sequences of clostridial ferredoxins: determination of the Clostridium sticklandii sequence and correction of the Clostridium acidurici sequence.</title>
        <authorList>
            <person name="Meyer J."/>
            <person name="Moulis J.-M."/>
            <person name="Scherrer N."/>
            <person name="Gagnon J."/>
            <person name="Ulrich J."/>
        </authorList>
    </citation>
    <scope>PROTEIN SEQUENCE OF 2-56</scope>
    <source>
        <strain>ATCC 12662 / DSM 519 / JCM 1433 / CCUG 9281 / NCIMB 10654 / HF</strain>
    </source>
</reference>